<reference key="1">
    <citation type="journal article" date="2008" name="PLoS Genet.">
        <title>Complete genome sequence of the N2-fixing broad host range endophyte Klebsiella pneumoniae 342 and virulence predictions verified in mice.</title>
        <authorList>
            <person name="Fouts D.E."/>
            <person name="Tyler H.L."/>
            <person name="DeBoy R.T."/>
            <person name="Daugherty S."/>
            <person name="Ren Q."/>
            <person name="Badger J.H."/>
            <person name="Durkin A.S."/>
            <person name="Huot H."/>
            <person name="Shrivastava S."/>
            <person name="Kothari S."/>
            <person name="Dodson R.J."/>
            <person name="Mohamoud Y."/>
            <person name="Khouri H."/>
            <person name="Roesch L.F.W."/>
            <person name="Krogfelt K.A."/>
            <person name="Struve C."/>
            <person name="Triplett E.W."/>
            <person name="Methe B.A."/>
        </authorList>
    </citation>
    <scope>NUCLEOTIDE SEQUENCE [LARGE SCALE GENOMIC DNA]</scope>
    <source>
        <strain>342</strain>
    </source>
</reference>
<protein>
    <recommendedName>
        <fullName evidence="1">Methylthioribulose-1-phosphate dehydratase</fullName>
        <shortName evidence="1">MTRu-1-P dehydratase</shortName>
        <ecNumber evidence="1">4.2.1.109</ecNumber>
    </recommendedName>
</protein>
<proteinExistence type="inferred from homology"/>
<organism>
    <name type="scientific">Klebsiella pneumoniae (strain 342)</name>
    <dbReference type="NCBI Taxonomy" id="507522"/>
    <lineage>
        <taxon>Bacteria</taxon>
        <taxon>Pseudomonadati</taxon>
        <taxon>Pseudomonadota</taxon>
        <taxon>Gammaproteobacteria</taxon>
        <taxon>Enterobacterales</taxon>
        <taxon>Enterobacteriaceae</taxon>
        <taxon>Klebsiella/Raoultella group</taxon>
        <taxon>Klebsiella</taxon>
        <taxon>Klebsiella pneumoniae complex</taxon>
    </lineage>
</organism>
<gene>
    <name evidence="1" type="primary">mtnB</name>
    <name type="ordered locus">KPK_3941</name>
</gene>
<name>MTNB_KLEP3</name>
<comment type="function">
    <text evidence="1">Catalyzes the dehydration of methylthioribulose-1-phosphate (MTRu-1-P) into 2,3-diketo-5-methylthiopentyl-1-phosphate (DK-MTP-1-P).</text>
</comment>
<comment type="catalytic activity">
    <reaction evidence="1">
        <text>5-(methylsulfanyl)-D-ribulose 1-phosphate = 5-methylsulfanyl-2,3-dioxopentyl phosphate + H2O</text>
        <dbReference type="Rhea" id="RHEA:15549"/>
        <dbReference type="ChEBI" id="CHEBI:15377"/>
        <dbReference type="ChEBI" id="CHEBI:58548"/>
        <dbReference type="ChEBI" id="CHEBI:58828"/>
        <dbReference type="EC" id="4.2.1.109"/>
    </reaction>
</comment>
<comment type="cofactor">
    <cofactor evidence="1">
        <name>Zn(2+)</name>
        <dbReference type="ChEBI" id="CHEBI:29105"/>
    </cofactor>
    <text evidence="1">Binds 1 zinc ion per subunit.</text>
</comment>
<comment type="pathway">
    <text evidence="1">Amino-acid biosynthesis; L-methionine biosynthesis via salvage pathway; L-methionine from S-methyl-5-thio-alpha-D-ribose 1-phosphate: step 2/6.</text>
</comment>
<comment type="similarity">
    <text evidence="1">Belongs to the aldolase class II family. MtnB subfamily.</text>
</comment>
<feature type="chain" id="PRO_1000187347" description="Methylthioribulose-1-phosphate dehydratase">
    <location>
        <begin position="1"/>
        <end position="202"/>
    </location>
</feature>
<feature type="binding site" evidence="1">
    <location>
        <position position="93"/>
    </location>
    <ligand>
        <name>Zn(2+)</name>
        <dbReference type="ChEBI" id="CHEBI:29105"/>
    </ligand>
</feature>
<feature type="binding site" evidence="1">
    <location>
        <position position="95"/>
    </location>
    <ligand>
        <name>Zn(2+)</name>
        <dbReference type="ChEBI" id="CHEBI:29105"/>
    </ligand>
</feature>
<keyword id="KW-0028">Amino-acid biosynthesis</keyword>
<keyword id="KW-0456">Lyase</keyword>
<keyword id="KW-0479">Metal-binding</keyword>
<keyword id="KW-0486">Methionine biosynthesis</keyword>
<keyword id="KW-0862">Zinc</keyword>
<accession>B5XZV4</accession>
<evidence type="ECO:0000255" key="1">
    <source>
        <dbReference type="HAMAP-Rule" id="MF_01677"/>
    </source>
</evidence>
<dbReference type="EC" id="4.2.1.109" evidence="1"/>
<dbReference type="EMBL" id="CP000964">
    <property type="protein sequence ID" value="ACI06861.1"/>
    <property type="molecule type" value="Genomic_DNA"/>
</dbReference>
<dbReference type="SMR" id="B5XZV4"/>
<dbReference type="KEGG" id="kpe:KPK_3941"/>
<dbReference type="HOGENOM" id="CLU_006033_4_1_6"/>
<dbReference type="UniPathway" id="UPA00904">
    <property type="reaction ID" value="UER00875"/>
</dbReference>
<dbReference type="Proteomes" id="UP000001734">
    <property type="component" value="Chromosome"/>
</dbReference>
<dbReference type="GO" id="GO:0005829">
    <property type="term" value="C:cytosol"/>
    <property type="evidence" value="ECO:0007669"/>
    <property type="project" value="TreeGrafter"/>
</dbReference>
<dbReference type="GO" id="GO:0016832">
    <property type="term" value="F:aldehyde-lyase activity"/>
    <property type="evidence" value="ECO:0007669"/>
    <property type="project" value="TreeGrafter"/>
</dbReference>
<dbReference type="GO" id="GO:0046570">
    <property type="term" value="F:methylthioribulose 1-phosphate dehydratase activity"/>
    <property type="evidence" value="ECO:0007669"/>
    <property type="project" value="UniProtKB-UniRule"/>
</dbReference>
<dbReference type="GO" id="GO:0008270">
    <property type="term" value="F:zinc ion binding"/>
    <property type="evidence" value="ECO:0007669"/>
    <property type="project" value="UniProtKB-UniRule"/>
</dbReference>
<dbReference type="GO" id="GO:0019509">
    <property type="term" value="P:L-methionine salvage from methylthioadenosine"/>
    <property type="evidence" value="ECO:0007669"/>
    <property type="project" value="UniProtKB-UniRule"/>
</dbReference>
<dbReference type="GO" id="GO:0019323">
    <property type="term" value="P:pentose catabolic process"/>
    <property type="evidence" value="ECO:0007669"/>
    <property type="project" value="TreeGrafter"/>
</dbReference>
<dbReference type="Gene3D" id="3.40.225.10">
    <property type="entry name" value="Class II aldolase/adducin N-terminal domain"/>
    <property type="match status" value="1"/>
</dbReference>
<dbReference type="HAMAP" id="MF_01677">
    <property type="entry name" value="Salvage_MtnB"/>
    <property type="match status" value="1"/>
</dbReference>
<dbReference type="InterPro" id="IPR050197">
    <property type="entry name" value="Aldolase_class_II_sugar_metab"/>
</dbReference>
<dbReference type="InterPro" id="IPR001303">
    <property type="entry name" value="Aldolase_II/adducin_N"/>
</dbReference>
<dbReference type="InterPro" id="IPR036409">
    <property type="entry name" value="Aldolase_II/adducin_N_sf"/>
</dbReference>
<dbReference type="InterPro" id="IPR017714">
    <property type="entry name" value="MethylthioRu-1-P_deHdtase_MtnB"/>
</dbReference>
<dbReference type="NCBIfam" id="NF006672">
    <property type="entry name" value="PRK09220.1"/>
    <property type="match status" value="1"/>
</dbReference>
<dbReference type="NCBIfam" id="TIGR03328">
    <property type="entry name" value="salvage_mtnB"/>
    <property type="match status" value="1"/>
</dbReference>
<dbReference type="PANTHER" id="PTHR22789:SF0">
    <property type="entry name" value="3-OXO-TETRONATE 4-PHOSPHATE DECARBOXYLASE-RELATED"/>
    <property type="match status" value="1"/>
</dbReference>
<dbReference type="PANTHER" id="PTHR22789">
    <property type="entry name" value="FUCULOSE PHOSPHATE ALDOLASE"/>
    <property type="match status" value="1"/>
</dbReference>
<dbReference type="Pfam" id="PF00596">
    <property type="entry name" value="Aldolase_II"/>
    <property type="match status" value="1"/>
</dbReference>
<dbReference type="SMART" id="SM01007">
    <property type="entry name" value="Aldolase_II"/>
    <property type="match status" value="1"/>
</dbReference>
<dbReference type="SUPFAM" id="SSF53639">
    <property type="entry name" value="AraD/HMP-PK domain-like"/>
    <property type="match status" value="1"/>
</dbReference>
<sequence>MWQERLAQLVTTCHWIGAKGWAPATGGNMSVRQDDTWCWLSESGRDKGSLTTEDFLQVEIATNQAPSGRKPSAETGLHTLVYRLFPEANVVLHVHTVNATVLSRIEKSDTLALQGYEMQKTLSGQHSHLDTVPVAIFDNDQDIDALAARIADYAQTRPLRYGFLLRGHGLTCWGKDIQEARRQLEGLEFLFECELMRRRYEP</sequence>